<proteinExistence type="inferred from homology"/>
<reference key="1">
    <citation type="submission" date="2008-12" db="EMBL/GenBank/DDBJ databases">
        <title>Complete sequence of chromosome of Methylobacterium chloromethanicum CM4.</title>
        <authorList>
            <consortium name="US DOE Joint Genome Institute"/>
            <person name="Lucas S."/>
            <person name="Copeland A."/>
            <person name="Lapidus A."/>
            <person name="Glavina del Rio T."/>
            <person name="Dalin E."/>
            <person name="Tice H."/>
            <person name="Bruce D."/>
            <person name="Goodwin L."/>
            <person name="Pitluck S."/>
            <person name="Chertkov O."/>
            <person name="Brettin T."/>
            <person name="Detter J.C."/>
            <person name="Han C."/>
            <person name="Larimer F."/>
            <person name="Land M."/>
            <person name="Hauser L."/>
            <person name="Kyrpides N."/>
            <person name="Mikhailova N."/>
            <person name="Marx C."/>
            <person name="Richardson P."/>
        </authorList>
    </citation>
    <scope>NUCLEOTIDE SEQUENCE [LARGE SCALE GENOMIC DNA]</scope>
    <source>
        <strain>CM4 / NCIMB 13688</strain>
    </source>
</reference>
<sequence>MVEPMNWISEVVRPRIKTLFKRETPENLWVKCPDTGQMVFHKEVEQNHWVIPGSEHHLKMSATARLKMMFDEGTWIDVPLPEVPADPLKFRDEKRYVDRLKEARAKTGMPDAFKIGFGRVGSLPMTIAAQEFGFMAGSLGMAGGEAFVRGAETALEKRTPYVLFAASGGARMQEGILSLMQMPRTTVAVRRLRAARLPYIVVLTNPTTGGVTASYAMLGDVHLAEPGALICFAGPRVIEQTIREKLPDGFQRAEYLREHGMVDQVVHRHQLKETISRLCGLLMDVRRTPQPGTAPEPTTPEPLPNAA</sequence>
<accession>B7KSK6</accession>
<gene>
    <name evidence="1" type="primary">accD</name>
    <name type="ordered locus">Mchl_4909</name>
</gene>
<comment type="function">
    <text evidence="1">Component of the acetyl coenzyme A carboxylase (ACC) complex. Biotin carboxylase (BC) catalyzes the carboxylation of biotin on its carrier protein (BCCP) and then the CO(2) group is transferred by the transcarboxylase to acetyl-CoA to form malonyl-CoA.</text>
</comment>
<comment type="catalytic activity">
    <reaction evidence="1">
        <text>N(6)-carboxybiotinyl-L-lysyl-[protein] + acetyl-CoA = N(6)-biotinyl-L-lysyl-[protein] + malonyl-CoA</text>
        <dbReference type="Rhea" id="RHEA:54728"/>
        <dbReference type="Rhea" id="RHEA-COMP:10505"/>
        <dbReference type="Rhea" id="RHEA-COMP:10506"/>
        <dbReference type="ChEBI" id="CHEBI:57288"/>
        <dbReference type="ChEBI" id="CHEBI:57384"/>
        <dbReference type="ChEBI" id="CHEBI:83144"/>
        <dbReference type="ChEBI" id="CHEBI:83145"/>
        <dbReference type="EC" id="2.1.3.15"/>
    </reaction>
</comment>
<comment type="pathway">
    <text evidence="1">Lipid metabolism; malonyl-CoA biosynthesis; malonyl-CoA from acetyl-CoA: step 1/1.</text>
</comment>
<comment type="subunit">
    <text evidence="1">Acetyl-CoA carboxylase is a heterohexamer composed of biotin carboxyl carrier protein (AccB), biotin carboxylase (AccC) and two subunits each of ACCase subunit alpha (AccA) and ACCase subunit beta (AccD).</text>
</comment>
<comment type="subcellular location">
    <subcellularLocation>
        <location evidence="1">Cytoplasm</location>
    </subcellularLocation>
</comment>
<comment type="similarity">
    <text evidence="1">Belongs to the AccD/PCCB family.</text>
</comment>
<dbReference type="EC" id="2.1.3.15" evidence="1"/>
<dbReference type="EMBL" id="CP001298">
    <property type="protein sequence ID" value="ACK85674.1"/>
    <property type="molecule type" value="Genomic_DNA"/>
</dbReference>
<dbReference type="RefSeq" id="WP_015952635.1">
    <property type="nucleotide sequence ID" value="NC_011757.1"/>
</dbReference>
<dbReference type="SMR" id="B7KSK6"/>
<dbReference type="KEGG" id="mch:Mchl_4909"/>
<dbReference type="HOGENOM" id="CLU_015486_1_0_5"/>
<dbReference type="UniPathway" id="UPA00655">
    <property type="reaction ID" value="UER00711"/>
</dbReference>
<dbReference type="Proteomes" id="UP000002385">
    <property type="component" value="Chromosome"/>
</dbReference>
<dbReference type="GO" id="GO:0009329">
    <property type="term" value="C:acetate CoA-transferase complex"/>
    <property type="evidence" value="ECO:0007669"/>
    <property type="project" value="TreeGrafter"/>
</dbReference>
<dbReference type="GO" id="GO:0003989">
    <property type="term" value="F:acetyl-CoA carboxylase activity"/>
    <property type="evidence" value="ECO:0007669"/>
    <property type="project" value="InterPro"/>
</dbReference>
<dbReference type="GO" id="GO:0005524">
    <property type="term" value="F:ATP binding"/>
    <property type="evidence" value="ECO:0007669"/>
    <property type="project" value="UniProtKB-KW"/>
</dbReference>
<dbReference type="GO" id="GO:0016743">
    <property type="term" value="F:carboxyl- or carbamoyltransferase activity"/>
    <property type="evidence" value="ECO:0007669"/>
    <property type="project" value="UniProtKB-UniRule"/>
</dbReference>
<dbReference type="GO" id="GO:0006633">
    <property type="term" value="P:fatty acid biosynthetic process"/>
    <property type="evidence" value="ECO:0007669"/>
    <property type="project" value="UniProtKB-KW"/>
</dbReference>
<dbReference type="GO" id="GO:2001295">
    <property type="term" value="P:malonyl-CoA biosynthetic process"/>
    <property type="evidence" value="ECO:0007669"/>
    <property type="project" value="UniProtKB-UniRule"/>
</dbReference>
<dbReference type="Gene3D" id="3.90.226.10">
    <property type="entry name" value="2-enoyl-CoA Hydratase, Chain A, domain 1"/>
    <property type="match status" value="1"/>
</dbReference>
<dbReference type="HAMAP" id="MF_01395">
    <property type="entry name" value="AcetylCoA_CT_beta"/>
    <property type="match status" value="1"/>
</dbReference>
<dbReference type="InterPro" id="IPR034733">
    <property type="entry name" value="AcCoA_carboxyl_beta"/>
</dbReference>
<dbReference type="InterPro" id="IPR000438">
    <property type="entry name" value="Acetyl_CoA_COase_Trfase_b_su"/>
</dbReference>
<dbReference type="InterPro" id="IPR029045">
    <property type="entry name" value="ClpP/crotonase-like_dom_sf"/>
</dbReference>
<dbReference type="InterPro" id="IPR011762">
    <property type="entry name" value="COA_CT_N"/>
</dbReference>
<dbReference type="NCBIfam" id="TIGR00515">
    <property type="entry name" value="accD"/>
    <property type="match status" value="1"/>
</dbReference>
<dbReference type="PANTHER" id="PTHR42995">
    <property type="entry name" value="ACETYL-COENZYME A CARBOXYLASE CARBOXYL TRANSFERASE SUBUNIT BETA, CHLOROPLASTIC"/>
    <property type="match status" value="1"/>
</dbReference>
<dbReference type="PANTHER" id="PTHR42995:SF5">
    <property type="entry name" value="ACETYL-COENZYME A CARBOXYLASE CARBOXYL TRANSFERASE SUBUNIT BETA, CHLOROPLASTIC"/>
    <property type="match status" value="1"/>
</dbReference>
<dbReference type="Pfam" id="PF01039">
    <property type="entry name" value="Carboxyl_trans"/>
    <property type="match status" value="1"/>
</dbReference>
<dbReference type="PRINTS" id="PR01070">
    <property type="entry name" value="ACCCTRFRASEB"/>
</dbReference>
<dbReference type="SUPFAM" id="SSF52096">
    <property type="entry name" value="ClpP/crotonase"/>
    <property type="match status" value="1"/>
</dbReference>
<dbReference type="PROSITE" id="PS50980">
    <property type="entry name" value="COA_CT_NTER"/>
    <property type="match status" value="1"/>
</dbReference>
<evidence type="ECO:0000255" key="1">
    <source>
        <dbReference type="HAMAP-Rule" id="MF_01395"/>
    </source>
</evidence>
<evidence type="ECO:0000255" key="2">
    <source>
        <dbReference type="PROSITE-ProRule" id="PRU01136"/>
    </source>
</evidence>
<evidence type="ECO:0000256" key="3">
    <source>
        <dbReference type="SAM" id="MobiDB-lite"/>
    </source>
</evidence>
<feature type="chain" id="PRO_0000389793" description="Acetyl-coenzyme A carboxylase carboxyl transferase subunit beta">
    <location>
        <begin position="1"/>
        <end position="307"/>
    </location>
</feature>
<feature type="domain" description="CoA carboxyltransferase N-terminal" evidence="2">
    <location>
        <begin position="28"/>
        <end position="297"/>
    </location>
</feature>
<feature type="region of interest" description="Disordered" evidence="3">
    <location>
        <begin position="286"/>
        <end position="307"/>
    </location>
</feature>
<feature type="compositionally biased region" description="Pro residues" evidence="3">
    <location>
        <begin position="292"/>
        <end position="307"/>
    </location>
</feature>
<protein>
    <recommendedName>
        <fullName evidence="1">Acetyl-coenzyme A carboxylase carboxyl transferase subunit beta</fullName>
        <shortName evidence="1">ACCase subunit beta</shortName>
        <shortName evidence="1">Acetyl-CoA carboxylase carboxyltransferase subunit beta</shortName>
        <ecNumber evidence="1">2.1.3.15</ecNumber>
    </recommendedName>
</protein>
<organism>
    <name type="scientific">Methylorubrum extorquens (strain CM4 / NCIMB 13688)</name>
    <name type="common">Methylobacterium extorquens</name>
    <dbReference type="NCBI Taxonomy" id="440085"/>
    <lineage>
        <taxon>Bacteria</taxon>
        <taxon>Pseudomonadati</taxon>
        <taxon>Pseudomonadota</taxon>
        <taxon>Alphaproteobacteria</taxon>
        <taxon>Hyphomicrobiales</taxon>
        <taxon>Methylobacteriaceae</taxon>
        <taxon>Methylorubrum</taxon>
    </lineage>
</organism>
<name>ACCD_METC4</name>
<keyword id="KW-0067">ATP-binding</keyword>
<keyword id="KW-0963">Cytoplasm</keyword>
<keyword id="KW-0275">Fatty acid biosynthesis</keyword>
<keyword id="KW-0276">Fatty acid metabolism</keyword>
<keyword id="KW-0444">Lipid biosynthesis</keyword>
<keyword id="KW-0443">Lipid metabolism</keyword>
<keyword id="KW-0547">Nucleotide-binding</keyword>
<keyword id="KW-0808">Transferase</keyword>